<organism>
    <name type="scientific">Amanita muscaria</name>
    <name type="common">Fly agaric</name>
    <name type="synonym">Agaricus muscarius</name>
    <dbReference type="NCBI Taxonomy" id="41956"/>
    <lineage>
        <taxon>Eukaryota</taxon>
        <taxon>Fungi</taxon>
        <taxon>Dikarya</taxon>
        <taxon>Basidiomycota</taxon>
        <taxon>Agaricomycotina</taxon>
        <taxon>Agaricomycetes</taxon>
        <taxon>Agaricomycetidae</taxon>
        <taxon>Agaricales</taxon>
        <taxon>Pluteineae</taxon>
        <taxon>Amanitaceae</taxon>
        <taxon>Amanita</taxon>
    </lineage>
</organism>
<feature type="chain" id="PRO_0000145536" description="Glyceraldehyde-3-phosphate dehydrogenase">
    <location>
        <begin position="1" status="less than"/>
        <end position="289" status="greater than"/>
    </location>
</feature>
<feature type="active site" description="Nucleophile" evidence="2">
    <location>
        <position position="129"/>
    </location>
</feature>
<feature type="binding site" evidence="1">
    <location>
        <position position="12"/>
    </location>
    <ligand>
        <name>NAD(+)</name>
        <dbReference type="ChEBI" id="CHEBI:57540"/>
    </ligand>
</feature>
<feature type="binding site" evidence="1">
    <location>
        <position position="57"/>
    </location>
    <ligand>
        <name>NAD(+)</name>
        <dbReference type="ChEBI" id="CHEBI:57540"/>
    </ligand>
</feature>
<feature type="binding site" evidence="1">
    <location>
        <begin position="128"/>
        <end position="130"/>
    </location>
    <ligand>
        <name>D-glyceraldehyde 3-phosphate</name>
        <dbReference type="ChEBI" id="CHEBI:59776"/>
    </ligand>
</feature>
<feature type="binding site" evidence="1">
    <location>
        <position position="159"/>
    </location>
    <ligand>
        <name>D-glyceraldehyde 3-phosphate</name>
        <dbReference type="ChEBI" id="CHEBI:59776"/>
    </ligand>
</feature>
<feature type="binding site" evidence="1">
    <location>
        <begin position="188"/>
        <end position="189"/>
    </location>
    <ligand>
        <name>D-glyceraldehyde 3-phosphate</name>
        <dbReference type="ChEBI" id="CHEBI:59776"/>
    </ligand>
</feature>
<feature type="binding site" evidence="1">
    <location>
        <position position="211"/>
    </location>
    <ligand>
        <name>D-glyceraldehyde 3-phosphate</name>
        <dbReference type="ChEBI" id="CHEBI:59776"/>
    </ligand>
</feature>
<feature type="site" description="Activates thiol group during catalysis" evidence="1">
    <location>
        <position position="156"/>
    </location>
</feature>
<feature type="non-terminal residue">
    <location>
        <position position="1"/>
    </location>
</feature>
<feature type="non-terminal residue">
    <location>
        <position position="289"/>
    </location>
</feature>
<reference key="1">
    <citation type="journal article" date="1996" name="Appl. Environ. Microbiol.">
        <title>Identification of some ectomycorrhizal basidiomycetes by PCR amplification of their gpd (glyceraldehyde-3-phosphate dehydrogenase) genes.</title>
        <authorList>
            <person name="Kreuzinger N."/>
            <person name="Podeu R."/>
            <person name="Gruber F."/>
            <person name="Gobl F."/>
            <person name="Kubicek C.P."/>
        </authorList>
    </citation>
    <scope>NUCLEOTIDE SEQUENCE [GENOMIC DNA]</scope>
</reference>
<protein>
    <recommendedName>
        <fullName>Glyceraldehyde-3-phosphate dehydrogenase</fullName>
        <shortName>GAPDH</shortName>
        <ecNumber>1.2.1.12</ecNumber>
    </recommendedName>
</protein>
<dbReference type="EC" id="1.2.1.12"/>
<dbReference type="EMBL" id="U30665">
    <property type="protein sequence ID" value="AAB38245.1"/>
    <property type="molecule type" value="Genomic_DNA"/>
</dbReference>
<dbReference type="SMR" id="P55071"/>
<dbReference type="UniPathway" id="UPA00109">
    <property type="reaction ID" value="UER00184"/>
</dbReference>
<dbReference type="GO" id="GO:0005829">
    <property type="term" value="C:cytosol"/>
    <property type="evidence" value="ECO:0007669"/>
    <property type="project" value="TreeGrafter"/>
</dbReference>
<dbReference type="GO" id="GO:0004365">
    <property type="term" value="F:glyceraldehyde-3-phosphate dehydrogenase (NAD+) (phosphorylating) activity"/>
    <property type="evidence" value="ECO:0007669"/>
    <property type="project" value="UniProtKB-EC"/>
</dbReference>
<dbReference type="GO" id="GO:0051287">
    <property type="term" value="F:NAD binding"/>
    <property type="evidence" value="ECO:0007669"/>
    <property type="project" value="InterPro"/>
</dbReference>
<dbReference type="GO" id="GO:0050661">
    <property type="term" value="F:NADP binding"/>
    <property type="evidence" value="ECO:0007669"/>
    <property type="project" value="InterPro"/>
</dbReference>
<dbReference type="GO" id="GO:0006006">
    <property type="term" value="P:glucose metabolic process"/>
    <property type="evidence" value="ECO:0007669"/>
    <property type="project" value="InterPro"/>
</dbReference>
<dbReference type="GO" id="GO:0006096">
    <property type="term" value="P:glycolytic process"/>
    <property type="evidence" value="ECO:0007669"/>
    <property type="project" value="UniProtKB-UniPathway"/>
</dbReference>
<dbReference type="CDD" id="cd18126">
    <property type="entry name" value="GAPDH_I_C"/>
    <property type="match status" value="1"/>
</dbReference>
<dbReference type="CDD" id="cd05214">
    <property type="entry name" value="GAPDH_I_N"/>
    <property type="match status" value="1"/>
</dbReference>
<dbReference type="FunFam" id="3.30.360.10:FF:000001">
    <property type="entry name" value="Glyceraldehyde-3-phosphate dehydrogenase"/>
    <property type="match status" value="1"/>
</dbReference>
<dbReference type="FunFam" id="3.40.50.720:FF:000266">
    <property type="entry name" value="Glyceraldehyde-3-phosphate dehydrogenase"/>
    <property type="match status" value="1"/>
</dbReference>
<dbReference type="Gene3D" id="3.30.360.10">
    <property type="entry name" value="Dihydrodipicolinate Reductase, domain 2"/>
    <property type="match status" value="1"/>
</dbReference>
<dbReference type="Gene3D" id="3.40.50.720">
    <property type="entry name" value="NAD(P)-binding Rossmann-like Domain"/>
    <property type="match status" value="1"/>
</dbReference>
<dbReference type="InterPro" id="IPR020831">
    <property type="entry name" value="GlycerAld/Erythrose_P_DH"/>
</dbReference>
<dbReference type="InterPro" id="IPR020830">
    <property type="entry name" value="GlycerAld_3-P_DH_AS"/>
</dbReference>
<dbReference type="InterPro" id="IPR020829">
    <property type="entry name" value="GlycerAld_3-P_DH_cat"/>
</dbReference>
<dbReference type="InterPro" id="IPR020828">
    <property type="entry name" value="GlycerAld_3-P_DH_NAD(P)-bd"/>
</dbReference>
<dbReference type="InterPro" id="IPR006424">
    <property type="entry name" value="Glyceraldehyde-3-P_DH_1"/>
</dbReference>
<dbReference type="InterPro" id="IPR036291">
    <property type="entry name" value="NAD(P)-bd_dom_sf"/>
</dbReference>
<dbReference type="NCBIfam" id="TIGR01534">
    <property type="entry name" value="GAPDH-I"/>
    <property type="match status" value="1"/>
</dbReference>
<dbReference type="PANTHER" id="PTHR10836">
    <property type="entry name" value="GLYCERALDEHYDE 3-PHOSPHATE DEHYDROGENASE"/>
    <property type="match status" value="1"/>
</dbReference>
<dbReference type="PANTHER" id="PTHR10836:SF76">
    <property type="entry name" value="GLYCERALDEHYDE-3-PHOSPHATE DEHYDROGENASE-RELATED"/>
    <property type="match status" value="1"/>
</dbReference>
<dbReference type="Pfam" id="PF02800">
    <property type="entry name" value="Gp_dh_C"/>
    <property type="match status" value="1"/>
</dbReference>
<dbReference type="Pfam" id="PF00044">
    <property type="entry name" value="Gp_dh_N"/>
    <property type="match status" value="1"/>
</dbReference>
<dbReference type="PIRSF" id="PIRSF000149">
    <property type="entry name" value="GAP_DH"/>
    <property type="match status" value="1"/>
</dbReference>
<dbReference type="PRINTS" id="PR00078">
    <property type="entry name" value="G3PDHDRGNASE"/>
</dbReference>
<dbReference type="SMART" id="SM00846">
    <property type="entry name" value="Gp_dh_N"/>
    <property type="match status" value="1"/>
</dbReference>
<dbReference type="SUPFAM" id="SSF55347">
    <property type="entry name" value="Glyceraldehyde-3-phosphate dehydrogenase-like, C-terminal domain"/>
    <property type="match status" value="1"/>
</dbReference>
<dbReference type="SUPFAM" id="SSF51735">
    <property type="entry name" value="NAD(P)-binding Rossmann-fold domains"/>
    <property type="match status" value="1"/>
</dbReference>
<dbReference type="PROSITE" id="PS00071">
    <property type="entry name" value="GAPDH"/>
    <property type="match status" value="1"/>
</dbReference>
<comment type="catalytic activity">
    <reaction evidence="2">
        <text>D-glyceraldehyde 3-phosphate + phosphate + NAD(+) = (2R)-3-phospho-glyceroyl phosphate + NADH + H(+)</text>
        <dbReference type="Rhea" id="RHEA:10300"/>
        <dbReference type="ChEBI" id="CHEBI:15378"/>
        <dbReference type="ChEBI" id="CHEBI:43474"/>
        <dbReference type="ChEBI" id="CHEBI:57540"/>
        <dbReference type="ChEBI" id="CHEBI:57604"/>
        <dbReference type="ChEBI" id="CHEBI:57945"/>
        <dbReference type="ChEBI" id="CHEBI:59776"/>
        <dbReference type="EC" id="1.2.1.12"/>
    </reaction>
</comment>
<comment type="pathway">
    <text>Carbohydrate degradation; glycolysis; pyruvate from D-glyceraldehyde 3-phosphate: step 1/5.</text>
</comment>
<comment type="subunit">
    <text evidence="1">Homotetramer.</text>
</comment>
<comment type="subcellular location">
    <subcellularLocation>
        <location>Cytoplasm</location>
    </subcellularLocation>
</comment>
<comment type="similarity">
    <text evidence="3">Belongs to the glyceraldehyde-3-phosphate dehydrogenase family.</text>
</comment>
<name>G3P_AMAMU</name>
<gene>
    <name type="primary">GPD</name>
</gene>
<sequence>LETDLDVVAINDPFIDLAYMVYMFKYDSVHGRFSGSVETKDGKLWINQKPITVFRKRDPVQIPWGSAGAEYIVESTGVFTTTEKASAHLKGGAKKIVISAPSADAPMFVCGVNLDKYDPKFQVVSNASCTTNCLAPLAKVVNDKFGIVEGLMTTVHATTATQKTVDGPSAKDWRGGRSVNNNIIPSSTGAAKAVGKVIPELNGKLTGLSFRVPTLDVSVVDLVVRIEQSATYDEIKEAFREASKGSLKGIIEYTDEHVVSTDFIGHTASSIFDSLAGIQLNANFVKLIA</sequence>
<keyword id="KW-0963">Cytoplasm</keyword>
<keyword id="KW-0324">Glycolysis</keyword>
<keyword id="KW-0520">NAD</keyword>
<keyword id="KW-0560">Oxidoreductase</keyword>
<evidence type="ECO:0000250" key="1"/>
<evidence type="ECO:0000255" key="2">
    <source>
        <dbReference type="PROSITE-ProRule" id="PRU10009"/>
    </source>
</evidence>
<evidence type="ECO:0000305" key="3"/>
<proteinExistence type="inferred from homology"/>
<accession>P55071</accession>